<organism>
    <name type="scientific">Aspergillus terreus (strain NIH 2624 / FGSC A1156)</name>
    <dbReference type="NCBI Taxonomy" id="341663"/>
    <lineage>
        <taxon>Eukaryota</taxon>
        <taxon>Fungi</taxon>
        <taxon>Dikarya</taxon>
        <taxon>Ascomycota</taxon>
        <taxon>Pezizomycotina</taxon>
        <taxon>Eurotiomycetes</taxon>
        <taxon>Eurotiomycetidae</taxon>
        <taxon>Eurotiales</taxon>
        <taxon>Aspergillaceae</taxon>
        <taxon>Aspergillus</taxon>
        <taxon>Aspergillus subgen. Circumdati</taxon>
    </lineage>
</organism>
<reference key="1">
    <citation type="submission" date="2005-09" db="EMBL/GenBank/DDBJ databases">
        <title>Annotation of the Aspergillus terreus NIH2624 genome.</title>
        <authorList>
            <person name="Birren B.W."/>
            <person name="Lander E.S."/>
            <person name="Galagan J.E."/>
            <person name="Nusbaum C."/>
            <person name="Devon K."/>
            <person name="Henn M."/>
            <person name="Ma L.-J."/>
            <person name="Jaffe D.B."/>
            <person name="Butler J."/>
            <person name="Alvarez P."/>
            <person name="Gnerre S."/>
            <person name="Grabherr M."/>
            <person name="Kleber M."/>
            <person name="Mauceli E.W."/>
            <person name="Brockman W."/>
            <person name="Rounsley S."/>
            <person name="Young S.K."/>
            <person name="LaButti K."/>
            <person name="Pushparaj V."/>
            <person name="DeCaprio D."/>
            <person name="Crawford M."/>
            <person name="Koehrsen M."/>
            <person name="Engels R."/>
            <person name="Montgomery P."/>
            <person name="Pearson M."/>
            <person name="Howarth C."/>
            <person name="Larson L."/>
            <person name="Luoma S."/>
            <person name="White J."/>
            <person name="Alvarado L."/>
            <person name="Kodira C.D."/>
            <person name="Zeng Q."/>
            <person name="Oleary S."/>
            <person name="Yandava C."/>
            <person name="Denning D.W."/>
            <person name="Nierman W.C."/>
            <person name="Milne T."/>
            <person name="Madden K."/>
        </authorList>
    </citation>
    <scope>NUCLEOTIDE SEQUENCE [LARGE SCALE GENOMIC DNA]</scope>
    <source>
        <strain>NIH 2624 / FGSC A1156</strain>
    </source>
</reference>
<reference key="2">
    <citation type="journal article" date="2022" name="Fungal Genet. Biol.">
        <title>Characterization of a silent azaphilone biosynthesis gene cluster in Aspergillus terreus NIH 2624.</title>
        <authorList>
            <person name="Sun W.W."/>
            <person name="Li C.Y."/>
            <person name="Chiang Y.M."/>
            <person name="Lin T.S."/>
            <person name="Warren S."/>
            <person name="Chang F.R."/>
            <person name="Wang C.C.C."/>
        </authorList>
    </citation>
    <scope>FUNCTION</scope>
    <scope>INDUCTION</scope>
    <scope>PATHWAY</scope>
</reference>
<proteinExistence type="evidence at transcript level"/>
<comment type="function">
    <text evidence="3 6">Short chain dehydrogenase; part of the gene cluster that mediates the biosynthesis of azaterrilone A and other azaphilones, a class of fungal metabolites characterized by a highly oxygenated pyrano-quinone bicyclic core and exhibiting a broad range of bioactivities (PubMed:35398258). The first step of the pathway begins with the non-reducing polyketide synthase tazA that assembles one acetyl-CoA starter unit, five malonyl-CoA units, and catalyzes a series of Claisen condensations, methylation, PT-mediated cyclization, and finally releases the first hexaketide precursor through the R-domain. The tazA product then undergoes reduction on its terminal ketone and the following pyran-ring formation by yet undetermined enzyme(s). Dehydration and enoyl reduction, possibly involving the trans-enoyl reductase tazE leads to the next intermediate. TazD is predicted as an acetyltransferase and might catalyze the acetylation steps leading to the synthesis of azaterrilone A. Azaterrilone A is not the final product of the taz pathway and both the highly reducing polyketide synthase tazB and the dual enzyme tazHJ catalyze late steps of the pathway, leading to the production of the 2 final stereoisomers that contain additional polyketide modification whose structures have still to be determined (Probable).</text>
</comment>
<comment type="pathway">
    <text evidence="6">Secondary metabolite biosynthesis.</text>
</comment>
<comment type="induction">
    <text evidence="3">Expression is positively regulated by the azaterrilone A cluster-specific transcription factor tazR.</text>
</comment>
<comment type="similarity">
    <text evidence="5">Belongs to the short-chain dehydrogenases/reductases (SDR) family.</text>
</comment>
<protein>
    <recommendedName>
        <fullName evidence="4">Short chain dehydrogenase tazN</fullName>
        <ecNumber evidence="6">1.1.1.-</ecNumber>
    </recommendedName>
    <alternativeName>
        <fullName evidence="4">Azaphilone biosynthesis cluster protein N</fullName>
    </alternativeName>
</protein>
<sequence length="456" mass="49926">MPPSKDQPNILRGPGDYEVTTRVHNDTYPEIDPRLLNLQGKSVFVTGGSRGLGRSMALSFAKAGVSKIAVGARSSLESLAKEIAEACVNPPEFLPVKLDVTDEASVAAAATEVGRAFGQLNVLVNNAGILGKYGLIADSDPEEWWEVLNVNLRGPYLVTRAFVPLLLKASKDDIRYIVNVCSVGAHLTNPTLSSYQVSKNALLKLTTLTNAEYGPGVITFAIHPGNSPTDIMGGPEAIPPHHKHVFVETPELSGDSVVFLVSKRREWLGGRYINCTWDLPELVSKEAEICIPVGLYQAKEYVDIPFNGLRPEIDTAFQGRKQRTPEQARRAQLAKYNVVKGGMDNRRDSQIFIRIKRSTKHNPRLVRLVGNKSRPATSGICRVDFFDCTAQKQRDKAQWQSLKLSKAQVTGSVVTHLTQILSGNSQRTAGIQRARELGQIIWPLAAEQSDSGNSLP</sequence>
<keyword id="KW-0521">NADP</keyword>
<keyword id="KW-0560">Oxidoreductase</keyword>
<keyword id="KW-1185">Reference proteome</keyword>
<gene>
    <name evidence="4" type="primary">tazN</name>
    <name type="ORF">ATEG_03438</name>
</gene>
<name>TAZN_ASPTN</name>
<dbReference type="EC" id="1.1.1.-" evidence="6"/>
<dbReference type="EMBL" id="CH476597">
    <property type="protein sequence ID" value="EAU36712.1"/>
    <property type="molecule type" value="Genomic_DNA"/>
</dbReference>
<dbReference type="RefSeq" id="XP_001212616.1">
    <property type="nucleotide sequence ID" value="XM_001212616.1"/>
</dbReference>
<dbReference type="SMR" id="Q0CS96"/>
<dbReference type="STRING" id="341663.Q0CS96"/>
<dbReference type="EnsemblFungi" id="EAU36712">
    <property type="protein sequence ID" value="EAU36712"/>
    <property type="gene ID" value="ATEG_03438"/>
</dbReference>
<dbReference type="GeneID" id="4317482"/>
<dbReference type="VEuPathDB" id="FungiDB:ATEG_03438"/>
<dbReference type="eggNOG" id="KOG0725">
    <property type="taxonomic scope" value="Eukaryota"/>
</dbReference>
<dbReference type="HOGENOM" id="CLU_599882_0_0_1"/>
<dbReference type="OMA" id="IHPGNVF"/>
<dbReference type="OrthoDB" id="1933717at2759"/>
<dbReference type="Proteomes" id="UP000007963">
    <property type="component" value="Unassembled WGS sequence"/>
</dbReference>
<dbReference type="GO" id="GO:0016616">
    <property type="term" value="F:oxidoreductase activity, acting on the CH-OH group of donors, NAD or NADP as acceptor"/>
    <property type="evidence" value="ECO:0007669"/>
    <property type="project" value="TreeGrafter"/>
</dbReference>
<dbReference type="CDD" id="cd05233">
    <property type="entry name" value="SDR_c"/>
    <property type="match status" value="1"/>
</dbReference>
<dbReference type="Gene3D" id="3.40.50.720">
    <property type="entry name" value="NAD(P)-binding Rossmann-like Domain"/>
    <property type="match status" value="1"/>
</dbReference>
<dbReference type="InterPro" id="IPR036291">
    <property type="entry name" value="NAD(P)-bd_dom_sf"/>
</dbReference>
<dbReference type="InterPro" id="IPR002347">
    <property type="entry name" value="SDR_fam"/>
</dbReference>
<dbReference type="PANTHER" id="PTHR42760:SF37">
    <property type="entry name" value="CLAVALDEHYDE DEHYDROGENASE"/>
    <property type="match status" value="1"/>
</dbReference>
<dbReference type="PANTHER" id="PTHR42760">
    <property type="entry name" value="SHORT-CHAIN DEHYDROGENASES/REDUCTASES FAMILY MEMBER"/>
    <property type="match status" value="1"/>
</dbReference>
<dbReference type="Pfam" id="PF00106">
    <property type="entry name" value="adh_short"/>
    <property type="match status" value="1"/>
</dbReference>
<dbReference type="PRINTS" id="PR00081">
    <property type="entry name" value="GDHRDH"/>
</dbReference>
<dbReference type="PRINTS" id="PR00080">
    <property type="entry name" value="SDRFAMILY"/>
</dbReference>
<dbReference type="SUPFAM" id="SSF51735">
    <property type="entry name" value="NAD(P)-binding Rossmann-fold domains"/>
    <property type="match status" value="1"/>
</dbReference>
<evidence type="ECO:0000250" key="1">
    <source>
        <dbReference type="UniProtKB" id="L0E2Z4"/>
    </source>
</evidence>
<evidence type="ECO:0000250" key="2">
    <source>
        <dbReference type="UniProtKB" id="O93868"/>
    </source>
</evidence>
<evidence type="ECO:0000269" key="3">
    <source>
    </source>
</evidence>
<evidence type="ECO:0000303" key="4">
    <source>
    </source>
</evidence>
<evidence type="ECO:0000305" key="5"/>
<evidence type="ECO:0000305" key="6">
    <source>
    </source>
</evidence>
<accession>Q0CS96</accession>
<feature type="chain" id="PRO_0000456070" description="Short chain dehydrogenase tazN">
    <location>
        <begin position="1"/>
        <end position="456"/>
    </location>
</feature>
<feature type="active site" description="Proton donor" evidence="2">
    <location>
        <position position="195"/>
    </location>
</feature>
<feature type="active site" description="Lowers pKa of active site Tyr" evidence="2">
    <location>
        <position position="199"/>
    </location>
</feature>
<feature type="binding site" evidence="1">
    <location>
        <position position="45"/>
    </location>
    <ligand>
        <name>NADP(+)</name>
        <dbReference type="ChEBI" id="CHEBI:58349"/>
    </ligand>
</feature>
<feature type="binding site" evidence="1">
    <location>
        <position position="99"/>
    </location>
    <ligand>
        <name>NADP(+)</name>
        <dbReference type="ChEBI" id="CHEBI:58349"/>
    </ligand>
</feature>
<feature type="binding site" evidence="2">
    <location>
        <position position="126"/>
    </location>
    <ligand>
        <name>NADP(+)</name>
        <dbReference type="ChEBI" id="CHEBI:58349"/>
    </ligand>
</feature>
<feature type="binding site" evidence="1">
    <location>
        <position position="160"/>
    </location>
    <ligand>
        <name>NADP(+)</name>
        <dbReference type="ChEBI" id="CHEBI:58349"/>
    </ligand>
</feature>
<feature type="binding site" evidence="2">
    <location>
        <position position="195"/>
    </location>
    <ligand>
        <name>NADP(+)</name>
        <dbReference type="ChEBI" id="CHEBI:58349"/>
    </ligand>
</feature>
<feature type="binding site" evidence="2">
    <location>
        <position position="199"/>
    </location>
    <ligand>
        <name>NADP(+)</name>
        <dbReference type="ChEBI" id="CHEBI:58349"/>
    </ligand>
</feature>
<feature type="binding site" evidence="1">
    <location>
        <position position="229"/>
    </location>
    <ligand>
        <name>NADP(+)</name>
        <dbReference type="ChEBI" id="CHEBI:58349"/>
    </ligand>
</feature>